<evidence type="ECO:0000255" key="1">
    <source>
        <dbReference type="HAMAP-Rule" id="MF_01333"/>
    </source>
</evidence>
<evidence type="ECO:0000305" key="2"/>
<feature type="chain" id="PRO_0000365646" description="Large ribosomal subunit protein uL5">
    <location>
        <begin position="1"/>
        <end position="173"/>
    </location>
</feature>
<organism>
    <name type="scientific">Nitrosopumilus maritimus (strain SCM1)</name>
    <dbReference type="NCBI Taxonomy" id="436308"/>
    <lineage>
        <taxon>Archaea</taxon>
        <taxon>Nitrososphaerota</taxon>
        <taxon>Nitrososphaeria</taxon>
        <taxon>Nitrosopumilales</taxon>
        <taxon>Nitrosopumilaceae</taxon>
        <taxon>Nitrosopumilus</taxon>
    </lineage>
</organism>
<protein>
    <recommendedName>
        <fullName evidence="1">Large ribosomal subunit protein uL5</fullName>
    </recommendedName>
    <alternativeName>
        <fullName evidence="2">50S ribosomal protein L5</fullName>
    </alternativeName>
</protein>
<reference key="1">
    <citation type="journal article" date="2010" name="Proc. Natl. Acad. Sci. U.S.A.">
        <title>Nitrosopumilus maritimus genome reveals unique mechanisms for nitrification and autotrophy in globally distributed marine crenarchaea.</title>
        <authorList>
            <person name="Walker C.B."/>
            <person name="de la Torre J.R."/>
            <person name="Klotz M.G."/>
            <person name="Urakawa H."/>
            <person name="Pinel N."/>
            <person name="Arp D.J."/>
            <person name="Brochier-Armanet C."/>
            <person name="Chain P.S."/>
            <person name="Chan P.P."/>
            <person name="Gollabgir A."/>
            <person name="Hemp J."/>
            <person name="Hugler M."/>
            <person name="Karr E.A."/>
            <person name="Konneke M."/>
            <person name="Shin M."/>
            <person name="Lawton T.J."/>
            <person name="Lowe T."/>
            <person name="Martens-Habbena W."/>
            <person name="Sayavedra-Soto L.A."/>
            <person name="Lang D."/>
            <person name="Sievert S.M."/>
            <person name="Rosenzweig A.C."/>
            <person name="Manning G."/>
            <person name="Stahl D.A."/>
        </authorList>
    </citation>
    <scope>NUCLEOTIDE SEQUENCE [LARGE SCALE GENOMIC DNA]</scope>
    <source>
        <strain>SCM1</strain>
    </source>
</reference>
<sequence length="173" mass="18708">MSQTTESPMKKISLEKVVLNMGVGKSGDVIEIASRALEQISGKKPSARNAKETQRDWGVRKGEPIGVAVTIRGDDAKALLKRLLEAKGNTVNGRAFDNFGNYSFGIREHIDIPGVKYEPSIGILGLGISVTLTRPGYGIRTRSKHKASVGKSHIITSQEAKDYLVKEFGVTVA</sequence>
<comment type="function">
    <text evidence="1">This is one of the proteins that bind and probably mediate the attachment of the 5S RNA into the large ribosomal subunit, where it forms part of the central protuberance. In the 70S ribosome it contacts protein S13 of the 30S subunit (bridge B1b), connecting the 2 subunits; this bridge is implicated in subunit movement. May contact the P site tRNA; the 5S rRNA and some of its associated proteins might help stabilize positioning of ribosome-bound tRNAs.</text>
</comment>
<comment type="subunit">
    <text evidence="1">Part of the 50S ribosomal subunit; contacts the 5S rRNA and probably tRNA. Forms a bridge to the 30S subunit in the 70S ribosome.</text>
</comment>
<comment type="similarity">
    <text evidence="1">Belongs to the universal ribosomal protein uL5 family.</text>
</comment>
<accession>A9A5I2</accession>
<keyword id="KW-1185">Reference proteome</keyword>
<keyword id="KW-0687">Ribonucleoprotein</keyword>
<keyword id="KW-0689">Ribosomal protein</keyword>
<keyword id="KW-0694">RNA-binding</keyword>
<keyword id="KW-0699">rRNA-binding</keyword>
<keyword id="KW-0820">tRNA-binding</keyword>
<proteinExistence type="inferred from homology"/>
<dbReference type="EMBL" id="CP000866">
    <property type="protein sequence ID" value="ABX12693.1"/>
    <property type="molecule type" value="Genomic_DNA"/>
</dbReference>
<dbReference type="RefSeq" id="WP_012215180.1">
    <property type="nucleotide sequence ID" value="NC_010085.1"/>
</dbReference>
<dbReference type="SMR" id="A9A5I2"/>
<dbReference type="FunCoup" id="A9A5I2">
    <property type="interactions" value="171"/>
</dbReference>
<dbReference type="STRING" id="436308.Nmar_0797"/>
<dbReference type="EnsemblBacteria" id="ABX12693">
    <property type="protein sequence ID" value="ABX12693"/>
    <property type="gene ID" value="Nmar_0797"/>
</dbReference>
<dbReference type="GeneID" id="5773769"/>
<dbReference type="KEGG" id="nmr:Nmar_0797"/>
<dbReference type="eggNOG" id="arCOG04092">
    <property type="taxonomic scope" value="Archaea"/>
</dbReference>
<dbReference type="HOGENOM" id="CLU_061015_3_0_2"/>
<dbReference type="InParanoid" id="A9A5I2"/>
<dbReference type="OrthoDB" id="372044at2157"/>
<dbReference type="PhylomeDB" id="A9A5I2"/>
<dbReference type="Proteomes" id="UP000000792">
    <property type="component" value="Chromosome"/>
</dbReference>
<dbReference type="GO" id="GO:0022625">
    <property type="term" value="C:cytosolic large ribosomal subunit"/>
    <property type="evidence" value="ECO:0000318"/>
    <property type="project" value="GO_Central"/>
</dbReference>
<dbReference type="GO" id="GO:0003723">
    <property type="term" value="F:RNA binding"/>
    <property type="evidence" value="ECO:0000318"/>
    <property type="project" value="GO_Central"/>
</dbReference>
<dbReference type="GO" id="GO:0019843">
    <property type="term" value="F:rRNA binding"/>
    <property type="evidence" value="ECO:0007669"/>
    <property type="project" value="UniProtKB-UniRule"/>
</dbReference>
<dbReference type="GO" id="GO:0003735">
    <property type="term" value="F:structural constituent of ribosome"/>
    <property type="evidence" value="ECO:0000318"/>
    <property type="project" value="GO_Central"/>
</dbReference>
<dbReference type="GO" id="GO:0000049">
    <property type="term" value="F:tRNA binding"/>
    <property type="evidence" value="ECO:0007669"/>
    <property type="project" value="UniProtKB-UniRule"/>
</dbReference>
<dbReference type="GO" id="GO:0006412">
    <property type="term" value="P:translation"/>
    <property type="evidence" value="ECO:0000318"/>
    <property type="project" value="GO_Central"/>
</dbReference>
<dbReference type="FunFam" id="3.30.1440.10:FF:000002">
    <property type="entry name" value="60S ribosomal protein L11"/>
    <property type="match status" value="1"/>
</dbReference>
<dbReference type="Gene3D" id="3.30.1440.10">
    <property type="match status" value="1"/>
</dbReference>
<dbReference type="HAMAP" id="MF_01333_A">
    <property type="entry name" value="Ribosomal_uL5_A"/>
    <property type="match status" value="1"/>
</dbReference>
<dbReference type="InterPro" id="IPR002132">
    <property type="entry name" value="Ribosomal_uL5"/>
</dbReference>
<dbReference type="InterPro" id="IPR022804">
    <property type="entry name" value="Ribosomal_uL5_arc"/>
</dbReference>
<dbReference type="InterPro" id="IPR031309">
    <property type="entry name" value="Ribosomal_uL5_C"/>
</dbReference>
<dbReference type="InterPro" id="IPR022803">
    <property type="entry name" value="Ribosomal_uL5_dom_sf"/>
</dbReference>
<dbReference type="InterPro" id="IPR031310">
    <property type="entry name" value="Ribosomal_uL5_N"/>
</dbReference>
<dbReference type="NCBIfam" id="NF003258">
    <property type="entry name" value="PRK04219.1"/>
    <property type="match status" value="1"/>
</dbReference>
<dbReference type="PANTHER" id="PTHR11994">
    <property type="entry name" value="60S RIBOSOMAL PROTEIN L11-RELATED"/>
    <property type="match status" value="1"/>
</dbReference>
<dbReference type="Pfam" id="PF00281">
    <property type="entry name" value="Ribosomal_L5"/>
    <property type="match status" value="1"/>
</dbReference>
<dbReference type="Pfam" id="PF00673">
    <property type="entry name" value="Ribosomal_L5_C"/>
    <property type="match status" value="1"/>
</dbReference>
<dbReference type="PIRSF" id="PIRSF002161">
    <property type="entry name" value="Ribosomal_L5"/>
    <property type="match status" value="1"/>
</dbReference>
<dbReference type="SUPFAM" id="SSF55282">
    <property type="entry name" value="RL5-like"/>
    <property type="match status" value="1"/>
</dbReference>
<gene>
    <name evidence="1" type="primary">rpl5</name>
    <name type="ordered locus">Nmar_0797</name>
</gene>
<name>RL5_NITMS</name>